<protein>
    <recommendedName>
        <fullName evidence="5">Electron transfer flavoprotein beta subunit lysine methyltransferase</fullName>
        <ecNumber evidence="2">2.1.1.-</ecNumber>
    </recommendedName>
    <alternativeName>
        <fullName>ETFB lysine methyltransferase</fullName>
        <shortName>ETFB-KMT</shortName>
    </alternativeName>
    <alternativeName>
        <fullName>Protein N-lysine methyltransferase METTL20</fullName>
    </alternativeName>
</protein>
<feature type="transit peptide" description="Mitochondrion" evidence="1">
    <location>
        <begin position="1"/>
        <end position="32"/>
    </location>
</feature>
<feature type="chain" id="PRO_0000318710" description="Electron transfer flavoprotein beta subunit lysine methyltransferase">
    <location>
        <begin position="33"/>
        <end position="255"/>
    </location>
</feature>
<feature type="sequence conflict" description="In Ref. 1; BAE20980." evidence="3" ref="1">
    <original>W</original>
    <variation>R</variation>
    <location>
        <position position="72"/>
    </location>
</feature>
<gene>
    <name evidence="5" type="primary">Etfbkmt</name>
    <name evidence="5" type="synonym">Mettl20</name>
</gene>
<keyword id="KW-0963">Cytoplasm</keyword>
<keyword id="KW-0489">Methyltransferase</keyword>
<keyword id="KW-0496">Mitochondrion</keyword>
<keyword id="KW-1185">Reference proteome</keyword>
<keyword id="KW-0808">Transferase</keyword>
<keyword id="KW-0809">Transit peptide</keyword>
<sequence>MAFSLCWKAPRSPWSFLQAVNNGSPLFLWRTVGSCLDPKMKAYLEENTEVTSSGSLTPEIQLRLLTPRCKFWWERADLWPYSDPYWAIYWPGGQALSRYLLDNPAVVRGKSVLDLGSGCGATAIAAKMSGASKILANDIDPIAGMAITLNCKLNGLNPFPVLTKNILNTQQGKFDLIVLGDMFYDEDLADSLHLWLQNYFWTHGTRVLIGDPGRPQFSGHSIRHQLYQLVEYTLPEPTQQENNGLTTSAVWDFHP</sequence>
<evidence type="ECO:0000250" key="1">
    <source>
        <dbReference type="UniProtKB" id="Q8IXQ9"/>
    </source>
</evidence>
<evidence type="ECO:0000269" key="2">
    <source>
    </source>
</evidence>
<evidence type="ECO:0000305" key="3"/>
<evidence type="ECO:0000305" key="4">
    <source>
    </source>
</evidence>
<evidence type="ECO:0000312" key="5">
    <source>
        <dbReference type="MGI" id="MGI:2443575"/>
    </source>
</evidence>
<organism>
    <name type="scientific">Mus musculus</name>
    <name type="common">Mouse</name>
    <dbReference type="NCBI Taxonomy" id="10090"/>
    <lineage>
        <taxon>Eukaryota</taxon>
        <taxon>Metazoa</taxon>
        <taxon>Chordata</taxon>
        <taxon>Craniata</taxon>
        <taxon>Vertebrata</taxon>
        <taxon>Euteleostomi</taxon>
        <taxon>Mammalia</taxon>
        <taxon>Eutheria</taxon>
        <taxon>Euarchontoglires</taxon>
        <taxon>Glires</taxon>
        <taxon>Rodentia</taxon>
        <taxon>Myomorpha</taxon>
        <taxon>Muroidea</taxon>
        <taxon>Muridae</taxon>
        <taxon>Murinae</taxon>
        <taxon>Mus</taxon>
        <taxon>Mus</taxon>
    </lineage>
</organism>
<comment type="function">
    <text evidence="2">Protein-lysine methyltransferase that selectively trimethylates the flavoprotein ETFB in mitochondria. Thereby, may negatively regulate the function of ETFB in electron transfer from Acyl-CoA dehydrogenases.</text>
</comment>
<comment type="catalytic activity">
    <reaction evidence="2">
        <text>L-lysyl-[protein] + 3 S-adenosyl-L-methionine = N(6),N(6),N(6)-trimethyl-L-lysyl-[protein] + 3 S-adenosyl-L-homocysteine + 3 H(+)</text>
        <dbReference type="Rhea" id="RHEA:54192"/>
        <dbReference type="Rhea" id="RHEA-COMP:9752"/>
        <dbReference type="Rhea" id="RHEA-COMP:13826"/>
        <dbReference type="ChEBI" id="CHEBI:15378"/>
        <dbReference type="ChEBI" id="CHEBI:29969"/>
        <dbReference type="ChEBI" id="CHEBI:57856"/>
        <dbReference type="ChEBI" id="CHEBI:59789"/>
        <dbReference type="ChEBI" id="CHEBI:61961"/>
    </reaction>
    <physiologicalReaction direction="left-to-right" evidence="4">
        <dbReference type="Rhea" id="RHEA:54193"/>
    </physiologicalReaction>
</comment>
<comment type="subunit">
    <text evidence="1">Interacts with HSPD1; this protein may possibly be a methylation substrate.</text>
</comment>
<comment type="subcellular location">
    <subcellularLocation>
        <location evidence="1">Cytoplasm</location>
    </subcellularLocation>
    <subcellularLocation>
        <location evidence="1">Mitochondrion matrix</location>
    </subcellularLocation>
    <text evidence="1">Concentrated in cytoplasmic granular foci.</text>
</comment>
<comment type="similarity">
    <text evidence="3">Belongs to the methyltransferase superfamily. ETFBKMT family.</text>
</comment>
<reference key="1">
    <citation type="journal article" date="2005" name="Science">
        <title>The transcriptional landscape of the mammalian genome.</title>
        <authorList>
            <person name="Carninci P."/>
            <person name="Kasukawa T."/>
            <person name="Katayama S."/>
            <person name="Gough J."/>
            <person name="Frith M.C."/>
            <person name="Maeda N."/>
            <person name="Oyama R."/>
            <person name="Ravasi T."/>
            <person name="Lenhard B."/>
            <person name="Wells C."/>
            <person name="Kodzius R."/>
            <person name="Shimokawa K."/>
            <person name="Bajic V.B."/>
            <person name="Brenner S.E."/>
            <person name="Batalov S."/>
            <person name="Forrest A.R."/>
            <person name="Zavolan M."/>
            <person name="Davis M.J."/>
            <person name="Wilming L.G."/>
            <person name="Aidinis V."/>
            <person name="Allen J.E."/>
            <person name="Ambesi-Impiombato A."/>
            <person name="Apweiler R."/>
            <person name="Aturaliya R.N."/>
            <person name="Bailey T.L."/>
            <person name="Bansal M."/>
            <person name="Baxter L."/>
            <person name="Beisel K.W."/>
            <person name="Bersano T."/>
            <person name="Bono H."/>
            <person name="Chalk A.M."/>
            <person name="Chiu K.P."/>
            <person name="Choudhary V."/>
            <person name="Christoffels A."/>
            <person name="Clutterbuck D.R."/>
            <person name="Crowe M.L."/>
            <person name="Dalla E."/>
            <person name="Dalrymple B.P."/>
            <person name="de Bono B."/>
            <person name="Della Gatta G."/>
            <person name="di Bernardo D."/>
            <person name="Down T."/>
            <person name="Engstrom P."/>
            <person name="Fagiolini M."/>
            <person name="Faulkner G."/>
            <person name="Fletcher C.F."/>
            <person name="Fukushima T."/>
            <person name="Furuno M."/>
            <person name="Futaki S."/>
            <person name="Gariboldi M."/>
            <person name="Georgii-Hemming P."/>
            <person name="Gingeras T.R."/>
            <person name="Gojobori T."/>
            <person name="Green R.E."/>
            <person name="Gustincich S."/>
            <person name="Harbers M."/>
            <person name="Hayashi Y."/>
            <person name="Hensch T.K."/>
            <person name="Hirokawa N."/>
            <person name="Hill D."/>
            <person name="Huminiecki L."/>
            <person name="Iacono M."/>
            <person name="Ikeo K."/>
            <person name="Iwama A."/>
            <person name="Ishikawa T."/>
            <person name="Jakt M."/>
            <person name="Kanapin A."/>
            <person name="Katoh M."/>
            <person name="Kawasawa Y."/>
            <person name="Kelso J."/>
            <person name="Kitamura H."/>
            <person name="Kitano H."/>
            <person name="Kollias G."/>
            <person name="Krishnan S.P."/>
            <person name="Kruger A."/>
            <person name="Kummerfeld S.K."/>
            <person name="Kurochkin I.V."/>
            <person name="Lareau L.F."/>
            <person name="Lazarevic D."/>
            <person name="Lipovich L."/>
            <person name="Liu J."/>
            <person name="Liuni S."/>
            <person name="McWilliam S."/>
            <person name="Madan Babu M."/>
            <person name="Madera M."/>
            <person name="Marchionni L."/>
            <person name="Matsuda H."/>
            <person name="Matsuzawa S."/>
            <person name="Miki H."/>
            <person name="Mignone F."/>
            <person name="Miyake S."/>
            <person name="Morris K."/>
            <person name="Mottagui-Tabar S."/>
            <person name="Mulder N."/>
            <person name="Nakano N."/>
            <person name="Nakauchi H."/>
            <person name="Ng P."/>
            <person name="Nilsson R."/>
            <person name="Nishiguchi S."/>
            <person name="Nishikawa S."/>
            <person name="Nori F."/>
            <person name="Ohara O."/>
            <person name="Okazaki Y."/>
            <person name="Orlando V."/>
            <person name="Pang K.C."/>
            <person name="Pavan W.J."/>
            <person name="Pavesi G."/>
            <person name="Pesole G."/>
            <person name="Petrovsky N."/>
            <person name="Piazza S."/>
            <person name="Reed J."/>
            <person name="Reid J.F."/>
            <person name="Ring B.Z."/>
            <person name="Ringwald M."/>
            <person name="Rost B."/>
            <person name="Ruan Y."/>
            <person name="Salzberg S.L."/>
            <person name="Sandelin A."/>
            <person name="Schneider C."/>
            <person name="Schoenbach C."/>
            <person name="Sekiguchi K."/>
            <person name="Semple C.A."/>
            <person name="Seno S."/>
            <person name="Sessa L."/>
            <person name="Sheng Y."/>
            <person name="Shibata Y."/>
            <person name="Shimada H."/>
            <person name="Shimada K."/>
            <person name="Silva D."/>
            <person name="Sinclair B."/>
            <person name="Sperling S."/>
            <person name="Stupka E."/>
            <person name="Sugiura K."/>
            <person name="Sultana R."/>
            <person name="Takenaka Y."/>
            <person name="Taki K."/>
            <person name="Tammoja K."/>
            <person name="Tan S.L."/>
            <person name="Tang S."/>
            <person name="Taylor M.S."/>
            <person name="Tegner J."/>
            <person name="Teichmann S.A."/>
            <person name="Ueda H.R."/>
            <person name="van Nimwegen E."/>
            <person name="Verardo R."/>
            <person name="Wei C.L."/>
            <person name="Yagi K."/>
            <person name="Yamanishi H."/>
            <person name="Zabarovsky E."/>
            <person name="Zhu S."/>
            <person name="Zimmer A."/>
            <person name="Hide W."/>
            <person name="Bult C."/>
            <person name="Grimmond S.M."/>
            <person name="Teasdale R.D."/>
            <person name="Liu E.T."/>
            <person name="Brusic V."/>
            <person name="Quackenbush J."/>
            <person name="Wahlestedt C."/>
            <person name="Mattick J.S."/>
            <person name="Hume D.A."/>
            <person name="Kai C."/>
            <person name="Sasaki D."/>
            <person name="Tomaru Y."/>
            <person name="Fukuda S."/>
            <person name="Kanamori-Katayama M."/>
            <person name="Suzuki M."/>
            <person name="Aoki J."/>
            <person name="Arakawa T."/>
            <person name="Iida J."/>
            <person name="Imamura K."/>
            <person name="Itoh M."/>
            <person name="Kato T."/>
            <person name="Kawaji H."/>
            <person name="Kawagashira N."/>
            <person name="Kawashima T."/>
            <person name="Kojima M."/>
            <person name="Kondo S."/>
            <person name="Konno H."/>
            <person name="Nakano K."/>
            <person name="Ninomiya N."/>
            <person name="Nishio T."/>
            <person name="Okada M."/>
            <person name="Plessy C."/>
            <person name="Shibata K."/>
            <person name="Shiraki T."/>
            <person name="Suzuki S."/>
            <person name="Tagami M."/>
            <person name="Waki K."/>
            <person name="Watahiki A."/>
            <person name="Okamura-Oho Y."/>
            <person name="Suzuki H."/>
            <person name="Kawai J."/>
            <person name="Hayashizaki Y."/>
        </authorList>
    </citation>
    <scope>NUCLEOTIDE SEQUENCE [LARGE SCALE MRNA]</scope>
    <source>
        <strain>C57BL/6J</strain>
        <tissue>Head</tissue>
    </source>
</reference>
<reference key="2">
    <citation type="journal article" date="2009" name="PLoS Biol.">
        <title>Lineage-specific biology revealed by a finished genome assembly of the mouse.</title>
        <authorList>
            <person name="Church D.M."/>
            <person name="Goodstadt L."/>
            <person name="Hillier L.W."/>
            <person name="Zody M.C."/>
            <person name="Goldstein S."/>
            <person name="She X."/>
            <person name="Bult C.J."/>
            <person name="Agarwala R."/>
            <person name="Cherry J.L."/>
            <person name="DiCuccio M."/>
            <person name="Hlavina W."/>
            <person name="Kapustin Y."/>
            <person name="Meric P."/>
            <person name="Maglott D."/>
            <person name="Birtle Z."/>
            <person name="Marques A.C."/>
            <person name="Graves T."/>
            <person name="Zhou S."/>
            <person name="Teague B."/>
            <person name="Potamousis K."/>
            <person name="Churas C."/>
            <person name="Place M."/>
            <person name="Herschleb J."/>
            <person name="Runnheim R."/>
            <person name="Forrest D."/>
            <person name="Amos-Landgraf J."/>
            <person name="Schwartz D.C."/>
            <person name="Cheng Z."/>
            <person name="Lindblad-Toh K."/>
            <person name="Eichler E.E."/>
            <person name="Ponting C.P."/>
        </authorList>
    </citation>
    <scope>NUCLEOTIDE SEQUENCE [LARGE SCALE GENOMIC DNA]</scope>
    <source>
        <strain>C57BL/6J</strain>
    </source>
</reference>
<reference key="3">
    <citation type="journal article" date="2004" name="Genome Res.">
        <title>The status, quality, and expansion of the NIH full-length cDNA project: the Mammalian Gene Collection (MGC).</title>
        <authorList>
            <consortium name="The MGC Project Team"/>
        </authorList>
    </citation>
    <scope>NUCLEOTIDE SEQUENCE [LARGE SCALE MRNA]</scope>
    <source>
        <strain>FVB/N</strain>
        <tissue>Embryo</tissue>
        <tissue>Mammary gland</tissue>
        <tissue>Mammary tumor</tissue>
    </source>
</reference>
<reference key="4">
    <citation type="journal article" date="2014" name="J. Biol. Chem.">
        <title>Human METTL20 methylates lysine residues adjacent to the recognition loop of the electron transfer flavoprotein in mitochondria.</title>
        <authorList>
            <person name="Rhein V.F."/>
            <person name="Carroll J."/>
            <person name="He J."/>
            <person name="Ding S."/>
            <person name="Fearnley I.M."/>
            <person name="Walker J.E."/>
        </authorList>
    </citation>
    <scope>FUNCTION</scope>
    <scope>CATALYTIC ACTIVITY</scope>
</reference>
<dbReference type="EC" id="2.1.1.-" evidence="2"/>
<dbReference type="EMBL" id="AK132096">
    <property type="protein sequence ID" value="BAE20980.1"/>
    <property type="molecule type" value="mRNA"/>
</dbReference>
<dbReference type="EMBL" id="CU207334">
    <property type="status" value="NOT_ANNOTATED_CDS"/>
    <property type="molecule type" value="Genomic_DNA"/>
</dbReference>
<dbReference type="EMBL" id="BC018279">
    <property type="protein sequence ID" value="AAH18279.1"/>
    <property type="molecule type" value="mRNA"/>
</dbReference>
<dbReference type="EMBL" id="BC048711">
    <property type="protein sequence ID" value="AAH48711.1"/>
    <property type="molecule type" value="mRNA"/>
</dbReference>
<dbReference type="EMBL" id="BC065807">
    <property type="protein sequence ID" value="AAH65807.1"/>
    <property type="molecule type" value="mRNA"/>
</dbReference>
<dbReference type="CCDS" id="CCDS20715.1"/>
<dbReference type="RefSeq" id="NP_001239023.1">
    <property type="nucleotide sequence ID" value="NM_001252094.1"/>
</dbReference>
<dbReference type="RefSeq" id="NP_001239024.1">
    <property type="nucleotide sequence ID" value="NM_001252095.1"/>
</dbReference>
<dbReference type="RefSeq" id="NP_001239025.1">
    <property type="nucleotide sequence ID" value="NM_001252096.1"/>
</dbReference>
<dbReference type="RefSeq" id="NP_796075.2">
    <property type="nucleotide sequence ID" value="NM_177101.5"/>
</dbReference>
<dbReference type="RefSeq" id="XP_017177126.1">
    <property type="nucleotide sequence ID" value="XM_017321637.3"/>
</dbReference>
<dbReference type="RefSeq" id="XP_036022115.1">
    <property type="nucleotide sequence ID" value="XM_036166222.1"/>
</dbReference>
<dbReference type="SMR" id="Q80ZM3"/>
<dbReference type="FunCoup" id="Q80ZM3">
    <property type="interactions" value="91"/>
</dbReference>
<dbReference type="STRING" id="10090.ENSMUSP00000136167"/>
<dbReference type="PhosphoSitePlus" id="Q80ZM3"/>
<dbReference type="PaxDb" id="10090-ENSMUSP00000042102"/>
<dbReference type="ProteomicsDB" id="275896"/>
<dbReference type="Antibodypedia" id="24685">
    <property type="antibodies" value="32 antibodies from 14 providers"/>
</dbReference>
<dbReference type="DNASU" id="320204"/>
<dbReference type="Ensembl" id="ENSMUST00000047531.16">
    <property type="protein sequence ID" value="ENSMUSP00000042102.10"/>
    <property type="gene ID" value="ENSMUSG00000039958.18"/>
</dbReference>
<dbReference type="Ensembl" id="ENSMUST00000111551.2">
    <property type="protein sequence ID" value="ENSMUSP00000107176.2"/>
    <property type="gene ID" value="ENSMUSG00000039958.18"/>
</dbReference>
<dbReference type="Ensembl" id="ENSMUST00000179873.8">
    <property type="protein sequence ID" value="ENSMUSP00000136167.2"/>
    <property type="gene ID" value="ENSMUSG00000039958.18"/>
</dbReference>
<dbReference type="GeneID" id="320204"/>
<dbReference type="KEGG" id="mmu:320204"/>
<dbReference type="UCSC" id="uc009etx.2">
    <property type="organism name" value="mouse"/>
</dbReference>
<dbReference type="AGR" id="MGI:2443575"/>
<dbReference type="CTD" id="254013"/>
<dbReference type="MGI" id="MGI:2443575">
    <property type="gene designation" value="Etfbkmt"/>
</dbReference>
<dbReference type="VEuPathDB" id="HostDB:ENSMUSG00000039958"/>
<dbReference type="eggNOG" id="ENOG502QUSY">
    <property type="taxonomic scope" value="Eukaryota"/>
</dbReference>
<dbReference type="GeneTree" id="ENSGT00940000162982"/>
<dbReference type="InParanoid" id="Q80ZM3"/>
<dbReference type="OMA" id="RQENYGL"/>
<dbReference type="OrthoDB" id="194386at2759"/>
<dbReference type="PhylomeDB" id="Q80ZM3"/>
<dbReference type="TreeFam" id="TF314934"/>
<dbReference type="Reactome" id="R-MMU-8876725">
    <property type="pathway name" value="Protein methylation"/>
</dbReference>
<dbReference type="BioGRID-ORCS" id="320204">
    <property type="hits" value="1 hit in 79 CRISPR screens"/>
</dbReference>
<dbReference type="ChiTaRS" id="Etfbkmt">
    <property type="organism name" value="mouse"/>
</dbReference>
<dbReference type="PRO" id="PR:Q80ZM3"/>
<dbReference type="Proteomes" id="UP000000589">
    <property type="component" value="Chromosome 6"/>
</dbReference>
<dbReference type="RNAct" id="Q80ZM3">
    <property type="molecule type" value="protein"/>
</dbReference>
<dbReference type="Bgee" id="ENSMUSG00000039958">
    <property type="expression patterns" value="Expressed in left lobe of liver and 224 other cell types or tissues"/>
</dbReference>
<dbReference type="ExpressionAtlas" id="Q80ZM3">
    <property type="expression patterns" value="baseline and differential"/>
</dbReference>
<dbReference type="GO" id="GO:0005759">
    <property type="term" value="C:mitochondrial matrix"/>
    <property type="evidence" value="ECO:0000250"/>
    <property type="project" value="UniProtKB"/>
</dbReference>
<dbReference type="GO" id="GO:0032991">
    <property type="term" value="C:protein-containing complex"/>
    <property type="evidence" value="ECO:0007669"/>
    <property type="project" value="Ensembl"/>
</dbReference>
<dbReference type="GO" id="GO:0031072">
    <property type="term" value="F:heat shock protein binding"/>
    <property type="evidence" value="ECO:0007669"/>
    <property type="project" value="Ensembl"/>
</dbReference>
<dbReference type="GO" id="GO:0016279">
    <property type="term" value="F:protein-lysine N-methyltransferase activity"/>
    <property type="evidence" value="ECO:0000315"/>
    <property type="project" value="UniProtKB"/>
</dbReference>
<dbReference type="GO" id="GO:1904736">
    <property type="term" value="P:negative regulation of fatty acid beta-oxidation using acyl-CoA dehydrogenase"/>
    <property type="evidence" value="ECO:0000315"/>
    <property type="project" value="UniProtKB"/>
</dbReference>
<dbReference type="GO" id="GO:0018023">
    <property type="term" value="P:peptidyl-lysine trimethylation"/>
    <property type="evidence" value="ECO:0000315"/>
    <property type="project" value="UniProtKB"/>
</dbReference>
<dbReference type="CDD" id="cd02440">
    <property type="entry name" value="AdoMet_MTases"/>
    <property type="match status" value="1"/>
</dbReference>
<dbReference type="FunFam" id="3.40.50.150:FF:000202">
    <property type="entry name" value="Electron transfer flavoprotein subunit beta lysine methyltransferase"/>
    <property type="match status" value="1"/>
</dbReference>
<dbReference type="Gene3D" id="3.40.50.150">
    <property type="entry name" value="Vaccinia Virus protein VP39"/>
    <property type="match status" value="1"/>
</dbReference>
<dbReference type="InterPro" id="IPR050078">
    <property type="entry name" value="Ribosomal_L11_MeTrfase_PrmA"/>
</dbReference>
<dbReference type="InterPro" id="IPR029063">
    <property type="entry name" value="SAM-dependent_MTases_sf"/>
</dbReference>
<dbReference type="PANTHER" id="PTHR43648">
    <property type="entry name" value="ELECTRON TRANSFER FLAVOPROTEIN BETA SUBUNIT LYSINE METHYLTRANSFERASE"/>
    <property type="match status" value="1"/>
</dbReference>
<dbReference type="PANTHER" id="PTHR43648:SF1">
    <property type="entry name" value="ELECTRON TRANSFER FLAVOPROTEIN BETA SUBUNIT LYSINE METHYLTRANSFERASE"/>
    <property type="match status" value="1"/>
</dbReference>
<dbReference type="Pfam" id="PF06325">
    <property type="entry name" value="PrmA"/>
    <property type="match status" value="1"/>
</dbReference>
<dbReference type="SUPFAM" id="SSF53335">
    <property type="entry name" value="S-adenosyl-L-methionine-dependent methyltransferases"/>
    <property type="match status" value="1"/>
</dbReference>
<proteinExistence type="evidence at protein level"/>
<accession>Q80ZM3</accession>
<accession>B8JKU7</accession>
<accession>Q3V219</accession>
<accession>Q8VEL3</accession>
<name>ETKMT_MOUSE</name>